<geneLocation type="plasmid">
    <name>pXFPD1.3</name>
</geneLocation>
<organism>
    <name type="scientific">Xylella fastidiosa (strain Temecula1 / ATCC 700964)</name>
    <dbReference type="NCBI Taxonomy" id="183190"/>
    <lineage>
        <taxon>Bacteria</taxon>
        <taxon>Pseudomonadati</taxon>
        <taxon>Pseudomonadota</taxon>
        <taxon>Gammaproteobacteria</taxon>
        <taxon>Lysobacterales</taxon>
        <taxon>Lysobacteraceae</taxon>
        <taxon>Xylella</taxon>
    </lineage>
</organism>
<reference key="1">
    <citation type="journal article" date="2003" name="J. Bacteriol.">
        <title>Comparative analyses of the complete genome sequences of Pierce's disease and citrus variegated chlorosis strains of Xylella fastidiosa.</title>
        <authorList>
            <person name="Van Sluys M.A."/>
            <person name="de Oliveira M.C."/>
            <person name="Monteiro-Vitorello C.B."/>
            <person name="Miyaki C.Y."/>
            <person name="Furlan L.R."/>
            <person name="Camargo L.E.A."/>
            <person name="da Silva A.C.R."/>
            <person name="Moon D.H."/>
            <person name="Takita M.A."/>
            <person name="Lemos E.G.M."/>
            <person name="Machado M.A."/>
            <person name="Ferro M.I.T."/>
            <person name="da Silva F.R."/>
            <person name="Goldman M.H.S."/>
            <person name="Goldman G.H."/>
            <person name="Lemos M.V.F."/>
            <person name="El-Dorry H."/>
            <person name="Tsai S.M."/>
            <person name="Carrer H."/>
            <person name="Carraro D.M."/>
            <person name="de Oliveira R.C."/>
            <person name="Nunes L.R."/>
            <person name="Siqueira W.J."/>
            <person name="Coutinho L.L."/>
            <person name="Kimura E.T."/>
            <person name="Ferro E.S."/>
            <person name="Harakava R."/>
            <person name="Kuramae E.E."/>
            <person name="Marino C.L."/>
            <person name="Giglioti E."/>
            <person name="Abreu I.L."/>
            <person name="Alves L.M.C."/>
            <person name="do Amaral A.M."/>
            <person name="Baia G.S."/>
            <person name="Blanco S.R."/>
            <person name="Brito M.S."/>
            <person name="Cannavan F.S."/>
            <person name="Celestino A.V."/>
            <person name="da Cunha A.F."/>
            <person name="Fenille R.C."/>
            <person name="Ferro J.A."/>
            <person name="Formighieri E.F."/>
            <person name="Kishi L.T."/>
            <person name="Leoni S.G."/>
            <person name="Oliveira A.R."/>
            <person name="Rosa V.E. Jr."/>
            <person name="Sassaki F.T."/>
            <person name="Sena J.A.D."/>
            <person name="de Souza A.A."/>
            <person name="Truffi D."/>
            <person name="Tsukumo F."/>
            <person name="Yanai G.M."/>
            <person name="Zaros L.G."/>
            <person name="Civerolo E.L."/>
            <person name="Simpson A.J.G."/>
            <person name="Almeida N.F. Jr."/>
            <person name="Setubal J.C."/>
            <person name="Kitajima J.P."/>
        </authorList>
    </citation>
    <scope>NUCLEOTIDE SEQUENCE [LARGE SCALE GENOMIC DNA]</scope>
    <source>
        <strain>Temecula1 / ATCC 700964</strain>
    </source>
</reference>
<accession>Q83WL3</accession>
<feature type="chain" id="PRO_0000097436" description="Putative replication protein PDa0002">
    <location>
        <begin position="1"/>
        <end position="263"/>
    </location>
</feature>
<proteinExistence type="predicted"/>
<dbReference type="EMBL" id="AE009443">
    <property type="protein sequence ID" value="AAO38514.1"/>
    <property type="molecule type" value="Genomic_DNA"/>
</dbReference>
<dbReference type="KEGG" id="xft:PDa0002"/>
<dbReference type="HOGENOM" id="CLU_983357_0_0_6"/>
<dbReference type="Proteomes" id="UP000002516">
    <property type="component" value="Plasmid pXFPD1.3"/>
</dbReference>
<dbReference type="GO" id="GO:0006260">
    <property type="term" value="P:DNA replication"/>
    <property type="evidence" value="ECO:0007669"/>
    <property type="project" value="UniProtKB-KW"/>
</dbReference>
<dbReference type="InterPro" id="IPR018247">
    <property type="entry name" value="EF_Hand_1_Ca_BS"/>
</dbReference>
<dbReference type="InterPro" id="IPR056906">
    <property type="entry name" value="ORF2/G2P_dom"/>
</dbReference>
<dbReference type="Pfam" id="PF23343">
    <property type="entry name" value="REP_ORF2-G2P"/>
    <property type="match status" value="1"/>
</dbReference>
<keyword id="KW-0235">DNA replication</keyword>
<keyword id="KW-0614">Plasmid</keyword>
<keyword id="KW-1185">Reference proteome</keyword>
<gene>
    <name type="ordered locus">PDa0002</name>
</gene>
<name>RPP_XYLFT</name>
<protein>
    <recommendedName>
        <fullName>Putative replication protein PDa0002</fullName>
    </recommendedName>
</protein>
<sequence length="263" mass="30058">MPVVTVYRHGGKGGVAPMNSSHIRTPRGDVQGWSPGAVRRNTQFLMCVREDKLTGAGFALTLTVRDCPATAQEWHKMRRAWEKRMLRAGMIRLHWVTEWQRRGVPHLHCAIWFSGTVYDFSLCIDAWLAVASSCGAALRGQHGRIIDGVVGWFQYVSKHAARGVRHYQRCSDNLPEAWKALTGRVWGKVGDWPLFSELRIDLQDHRQDGDGGFFAYRRLVRSWRVSDARRAGDRYRLRSARRMLTCSDTSRSRAIGFMEWGSL</sequence>